<feature type="chain" id="PRO_0000237321" description="DNA-directed RNA polymerase subunit beta">
    <location>
        <begin position="1"/>
        <end position="1363"/>
    </location>
</feature>
<name>RPOB_SYNAS</name>
<comment type="function">
    <text evidence="1">DNA-dependent RNA polymerase catalyzes the transcription of DNA into RNA using the four ribonucleoside triphosphates as substrates.</text>
</comment>
<comment type="catalytic activity">
    <reaction evidence="1">
        <text>RNA(n) + a ribonucleoside 5'-triphosphate = RNA(n+1) + diphosphate</text>
        <dbReference type="Rhea" id="RHEA:21248"/>
        <dbReference type="Rhea" id="RHEA-COMP:14527"/>
        <dbReference type="Rhea" id="RHEA-COMP:17342"/>
        <dbReference type="ChEBI" id="CHEBI:33019"/>
        <dbReference type="ChEBI" id="CHEBI:61557"/>
        <dbReference type="ChEBI" id="CHEBI:140395"/>
        <dbReference type="EC" id="2.7.7.6"/>
    </reaction>
</comment>
<comment type="subunit">
    <text evidence="1">The RNAP catalytic core consists of 2 alpha, 1 beta, 1 beta' and 1 omega subunit. When a sigma factor is associated with the core the holoenzyme is formed, which can initiate transcription.</text>
</comment>
<comment type="similarity">
    <text evidence="1">Belongs to the RNA polymerase beta chain family.</text>
</comment>
<accession>Q2LQ87</accession>
<sequence>MGEFRKNFGRIEEILEVPNLIDIQTRSYETFLQEDVAPENRKNFGLQGAFKSVFPISDFSGKCSLEFVSYKIGAVRYDVNECIQKGMTYAAPLKIVVRLVVFDTDRLSDQKNIRDIKEQEIYFGEIPLMTEKGTFIVNGTERVIVSQLHRSPGIFFDHDKGKTLTSGKLIYSARIIPIRGSWLDLEFDSKDLLYVRIDRRRKMPVTILLKAMGYSTEDLLNYFYDVEHIFCEGENFYAAVDESLVGHKLYDDIRDINTGEILFKKGRRINKVILKRIREQRVERIKMDVEELPGRILATDILDPETGEVLFHCNEALSAAGIDVVREKGIRELSVINLGEDLSNVSIRDTLLIDRMETPGDAIIEIYRRLRPSNPPTPDTAQKFFNSLFFENESYDLSTVGRAKMNYKLRLDVSTDVTVLRKEDIMAAVKYLIDLKNGVPECSVDDIDHLGNRRVRSVGELIENQYRIGLVRMERAIKEKMSLQDIETMMPHDLVNVKPVSAVVSEFFGSSQLSQFMDQTNPLSEITHKRRLSALGPGGLTRERAGFEVRDVHPTHYGRICPVETPEGPNIGLIVSLSTYARVNEFGFIETPYRIVKEGRVLPEVKFLTAIEEENQVIAPADQPVNHDGSFKGDLISARKGGDFVNVVPSEVNMVDVSPNQLVSVAATLIPFLEHDDANRALMGSNMQRQAVPLMRPEIPLVGTGMERIVARDSGAVVVAKRSGIVESVDASRIVIKCESAEKTDRDTGVDIYTLIKYQRSNQDTCFNQKAIVNKGQRVRKGDIIADGPATDNGELALGHNVMVAFMSWGGYNYEDSILVSERIVKEDIYTSIHIEEFETMARDTKLGKEDITRDIPNVGEEALRNLDDSGIVRMGVSVKSGDILVGKITPKGETQLSSEEKLLRAIFGEKASDVRDTSLRVPPGVEGTVIDAKVFTRKGAEKDHRSQYIEDEAIAMLQKDREDEIRIITEAVKKEVGTLLQGKQSGAKIVDPKRKKIYLKKGDIITPEILSEIPLHLWKEITVADDEETERAVGQMMANLYDKIEVVEAYFNEKTEKLKASDELPPGVIKMVKVYIAIKRKLQAGDKMAGRHGNKGVLSRILPEEDMPYFKDGRPVDIVLNPLGVPSRMNVGQILETHLGWAAKGLGEKLNDMLDSYQKGNQLRDELKGIYQSREFEKFVDGATEEETYQFVRKLRRGIAVSSPVFDGATESDIRNMLKLANLPSTGQAILYDGRTGEPFDQEITVGMIYMLKLHHLVDNKIHARSIGPYSLVTQQPLGGKAQFGGQRLGEMEVWAMEAYGAAYSLQEFLTVKSDDVAGRTRIYEAIVKGENTSEPGLPESFNVLVKELQSLCLDVELIEEE</sequence>
<proteinExistence type="inferred from homology"/>
<keyword id="KW-0240">DNA-directed RNA polymerase</keyword>
<keyword id="KW-0548">Nucleotidyltransferase</keyword>
<keyword id="KW-1185">Reference proteome</keyword>
<keyword id="KW-0804">Transcription</keyword>
<keyword id="KW-0808">Transferase</keyword>
<reference key="1">
    <citation type="journal article" date="2007" name="Proc. Natl. Acad. Sci. U.S.A.">
        <title>The genome of Syntrophus aciditrophicus: life at the thermodynamic limit of microbial growth.</title>
        <authorList>
            <person name="McInerney M.J."/>
            <person name="Rohlin L."/>
            <person name="Mouttaki H."/>
            <person name="Kim U."/>
            <person name="Krupp R.S."/>
            <person name="Rios-Hernandez L."/>
            <person name="Sieber J."/>
            <person name="Struchtemeyer C.G."/>
            <person name="Bhattacharyya A."/>
            <person name="Campbell J.W."/>
            <person name="Gunsalus R.P."/>
        </authorList>
    </citation>
    <scope>NUCLEOTIDE SEQUENCE [LARGE SCALE GENOMIC DNA]</scope>
    <source>
        <strain>SB</strain>
    </source>
</reference>
<gene>
    <name evidence="1" type="primary">rpoB</name>
    <name type="ordered locus">SYNAS_02930</name>
    <name type="ORF">SYN_00064</name>
</gene>
<organism>
    <name type="scientific">Syntrophus aciditrophicus (strain SB)</name>
    <dbReference type="NCBI Taxonomy" id="56780"/>
    <lineage>
        <taxon>Bacteria</taxon>
        <taxon>Pseudomonadati</taxon>
        <taxon>Thermodesulfobacteriota</taxon>
        <taxon>Syntrophia</taxon>
        <taxon>Syntrophales</taxon>
        <taxon>Syntrophaceae</taxon>
        <taxon>Syntrophus</taxon>
    </lineage>
</organism>
<evidence type="ECO:0000255" key="1">
    <source>
        <dbReference type="HAMAP-Rule" id="MF_01321"/>
    </source>
</evidence>
<dbReference type="EC" id="2.7.7.6" evidence="1"/>
<dbReference type="EMBL" id="CP000252">
    <property type="protein sequence ID" value="ABC76172.1"/>
    <property type="molecule type" value="Genomic_DNA"/>
</dbReference>
<dbReference type="RefSeq" id="WP_011416206.1">
    <property type="nucleotide sequence ID" value="NC_007759.1"/>
</dbReference>
<dbReference type="SMR" id="Q2LQ87"/>
<dbReference type="FunCoup" id="Q2LQ87">
    <property type="interactions" value="509"/>
</dbReference>
<dbReference type="STRING" id="56780.SYN_00064"/>
<dbReference type="KEGG" id="sat:SYN_00064"/>
<dbReference type="eggNOG" id="COG0085">
    <property type="taxonomic scope" value="Bacteria"/>
</dbReference>
<dbReference type="HOGENOM" id="CLU_000524_4_0_7"/>
<dbReference type="InParanoid" id="Q2LQ87"/>
<dbReference type="OrthoDB" id="9803954at2"/>
<dbReference type="Proteomes" id="UP000001933">
    <property type="component" value="Chromosome"/>
</dbReference>
<dbReference type="GO" id="GO:0000428">
    <property type="term" value="C:DNA-directed RNA polymerase complex"/>
    <property type="evidence" value="ECO:0007669"/>
    <property type="project" value="UniProtKB-KW"/>
</dbReference>
<dbReference type="GO" id="GO:0003677">
    <property type="term" value="F:DNA binding"/>
    <property type="evidence" value="ECO:0007669"/>
    <property type="project" value="UniProtKB-UniRule"/>
</dbReference>
<dbReference type="GO" id="GO:0003899">
    <property type="term" value="F:DNA-directed RNA polymerase activity"/>
    <property type="evidence" value="ECO:0007669"/>
    <property type="project" value="UniProtKB-UniRule"/>
</dbReference>
<dbReference type="GO" id="GO:0032549">
    <property type="term" value="F:ribonucleoside binding"/>
    <property type="evidence" value="ECO:0007669"/>
    <property type="project" value="InterPro"/>
</dbReference>
<dbReference type="GO" id="GO:0006351">
    <property type="term" value="P:DNA-templated transcription"/>
    <property type="evidence" value="ECO:0007669"/>
    <property type="project" value="UniProtKB-UniRule"/>
</dbReference>
<dbReference type="CDD" id="cd00653">
    <property type="entry name" value="RNA_pol_B_RPB2"/>
    <property type="match status" value="1"/>
</dbReference>
<dbReference type="FunFam" id="2.40.50.100:FF:000006">
    <property type="entry name" value="DNA-directed RNA polymerase subunit beta"/>
    <property type="match status" value="1"/>
</dbReference>
<dbReference type="FunFam" id="3.90.1800.10:FF:000001">
    <property type="entry name" value="DNA-directed RNA polymerase subunit beta"/>
    <property type="match status" value="1"/>
</dbReference>
<dbReference type="Gene3D" id="2.40.50.100">
    <property type="match status" value="1"/>
</dbReference>
<dbReference type="Gene3D" id="2.40.50.150">
    <property type="match status" value="1"/>
</dbReference>
<dbReference type="Gene3D" id="3.90.1100.10">
    <property type="match status" value="2"/>
</dbReference>
<dbReference type="Gene3D" id="2.30.150.10">
    <property type="entry name" value="DNA-directed RNA polymerase, beta subunit, external 1 domain"/>
    <property type="match status" value="1"/>
</dbReference>
<dbReference type="Gene3D" id="2.40.270.10">
    <property type="entry name" value="DNA-directed RNA polymerase, subunit 2, domain 6"/>
    <property type="match status" value="1"/>
</dbReference>
<dbReference type="Gene3D" id="3.90.1800.10">
    <property type="entry name" value="RNA polymerase alpha subunit dimerisation domain"/>
    <property type="match status" value="1"/>
</dbReference>
<dbReference type="Gene3D" id="3.90.1110.10">
    <property type="entry name" value="RNA polymerase Rpb2, domain 2"/>
    <property type="match status" value="1"/>
</dbReference>
<dbReference type="HAMAP" id="MF_01321">
    <property type="entry name" value="RNApol_bact_RpoB"/>
    <property type="match status" value="1"/>
</dbReference>
<dbReference type="InterPro" id="IPR042107">
    <property type="entry name" value="DNA-dir_RNA_pol_bsu_ext_1_sf"/>
</dbReference>
<dbReference type="InterPro" id="IPR019462">
    <property type="entry name" value="DNA-dir_RNA_pol_bsu_external_1"/>
</dbReference>
<dbReference type="InterPro" id="IPR015712">
    <property type="entry name" value="DNA-dir_RNA_pol_su2"/>
</dbReference>
<dbReference type="InterPro" id="IPR007120">
    <property type="entry name" value="DNA-dir_RNAP_su2_dom"/>
</dbReference>
<dbReference type="InterPro" id="IPR037033">
    <property type="entry name" value="DNA-dir_RNAP_su2_hyb_sf"/>
</dbReference>
<dbReference type="InterPro" id="IPR010243">
    <property type="entry name" value="RNA_pol_bsu_bac"/>
</dbReference>
<dbReference type="InterPro" id="IPR007121">
    <property type="entry name" value="RNA_pol_bsu_CS"/>
</dbReference>
<dbReference type="InterPro" id="IPR007644">
    <property type="entry name" value="RNA_pol_bsu_protrusion"/>
</dbReference>
<dbReference type="InterPro" id="IPR007642">
    <property type="entry name" value="RNA_pol_Rpb2_2"/>
</dbReference>
<dbReference type="InterPro" id="IPR037034">
    <property type="entry name" value="RNA_pol_Rpb2_2_sf"/>
</dbReference>
<dbReference type="InterPro" id="IPR007645">
    <property type="entry name" value="RNA_pol_Rpb2_3"/>
</dbReference>
<dbReference type="InterPro" id="IPR007641">
    <property type="entry name" value="RNA_pol_Rpb2_7"/>
</dbReference>
<dbReference type="InterPro" id="IPR014724">
    <property type="entry name" value="RNA_pol_RPB2_OB-fold"/>
</dbReference>
<dbReference type="NCBIfam" id="NF001616">
    <property type="entry name" value="PRK00405.1"/>
    <property type="match status" value="1"/>
</dbReference>
<dbReference type="NCBIfam" id="TIGR02013">
    <property type="entry name" value="rpoB"/>
    <property type="match status" value="1"/>
</dbReference>
<dbReference type="PANTHER" id="PTHR20856">
    <property type="entry name" value="DNA-DIRECTED RNA POLYMERASE I SUBUNIT 2"/>
    <property type="match status" value="1"/>
</dbReference>
<dbReference type="Pfam" id="PF04563">
    <property type="entry name" value="RNA_pol_Rpb2_1"/>
    <property type="match status" value="1"/>
</dbReference>
<dbReference type="Pfam" id="PF04561">
    <property type="entry name" value="RNA_pol_Rpb2_2"/>
    <property type="match status" value="2"/>
</dbReference>
<dbReference type="Pfam" id="PF04565">
    <property type="entry name" value="RNA_pol_Rpb2_3"/>
    <property type="match status" value="1"/>
</dbReference>
<dbReference type="Pfam" id="PF10385">
    <property type="entry name" value="RNA_pol_Rpb2_45"/>
    <property type="match status" value="1"/>
</dbReference>
<dbReference type="Pfam" id="PF00562">
    <property type="entry name" value="RNA_pol_Rpb2_6"/>
    <property type="match status" value="1"/>
</dbReference>
<dbReference type="Pfam" id="PF04560">
    <property type="entry name" value="RNA_pol_Rpb2_7"/>
    <property type="match status" value="1"/>
</dbReference>
<dbReference type="SUPFAM" id="SSF64484">
    <property type="entry name" value="beta and beta-prime subunits of DNA dependent RNA-polymerase"/>
    <property type="match status" value="1"/>
</dbReference>
<dbReference type="PROSITE" id="PS01166">
    <property type="entry name" value="RNA_POL_BETA"/>
    <property type="match status" value="1"/>
</dbReference>
<protein>
    <recommendedName>
        <fullName evidence="1">DNA-directed RNA polymerase subunit beta</fullName>
        <shortName evidence="1">RNAP subunit beta</shortName>
        <ecNumber evidence="1">2.7.7.6</ecNumber>
    </recommendedName>
    <alternativeName>
        <fullName evidence="1">RNA polymerase subunit beta</fullName>
    </alternativeName>
    <alternativeName>
        <fullName evidence="1">Transcriptase subunit beta</fullName>
    </alternativeName>
</protein>